<sequence length="716" mass="80462">MQSTANYLWHTDDLLGQGATASVYKARNKKSGELVAVKVFNTTSYLRPREVQVREFEVLRKLNHQNIVKLFAVEETGGSRQKVLVMEYCSSGSLLSVLESPENAFGLPEDEFLVVLRCVVAGMNHLRENGIVHRDIKPGNIMRLVGEEGQSIYKLTDFGAARELDDDEKFVSVYGTEEYLHPDMYERAVLRKPQQKAFGVTVDLWSIGVTLYHAATGSLPFIPFGGPRRNKEIMYRITTEKPAGAIAGAQRRENGPLEWSYTLPITCQLSLGLQSQLVPILANILEVEQAKCWGFDQFFAETSDILQRVVVHVFSLSQAVLHHIYIHAHNTIAIFQEAVHKQTSVAPRHQEYLFEGHLCVLEPSVSAQHIAHTTASSPLTLFSTAIPKGLAFRDPALDVPKFVPKVDLQADYNTAKGVLGAGYQALRLARALLDGQELMFRGLHWVMEVLQATCRRTLEVARTSLLYLSSSLGTERFSSVAGTPEIQELKAAAELRSRLRTLAEVLSRCSQNITETQESLSSLNRELVKSRDQVHEDRSIQQIQCCLDKMNFIYKQFKKSRMRPGLGYNEEQIHKLDKVNFSHLAKRLLQVFQEECVQKYQASLVTHGKRMRVVHETRNHLRLVGCSVAACNTEAQGVQESLSKLLEELSHQLLQDRAKGAQASPPPIAPYPSPTRKDLLLHMQELCEGMKLLASDLLDNNRIIERLNRVPAPPDV</sequence>
<keyword id="KW-0025">Alternative splicing</keyword>
<keyword id="KW-0067">ATP-binding</keyword>
<keyword id="KW-0963">Cytoplasm</keyword>
<keyword id="KW-0227">DNA damage</keyword>
<keyword id="KW-0945">Host-virus interaction</keyword>
<keyword id="KW-1017">Isopeptide bond</keyword>
<keyword id="KW-0418">Kinase</keyword>
<keyword id="KW-0547">Nucleotide-binding</keyword>
<keyword id="KW-0539">Nucleus</keyword>
<keyword id="KW-0597">Phosphoprotein</keyword>
<keyword id="KW-1267">Proteomics identification</keyword>
<keyword id="KW-1185">Reference proteome</keyword>
<keyword id="KW-0723">Serine/threonine-protein kinase</keyword>
<keyword id="KW-0808">Transferase</keyword>
<keyword id="KW-0832">Ubl conjugation</keyword>
<comment type="function">
    <text evidence="8 10 13 14 16 17 18 19 20">Serine/threonine kinase that plays an essential role in regulating inflammatory responses to viral infection, through the activation of the type I IFN, NF-kappa-B and STAT signaling. Also involved in TNFA and inflammatory cytokines, like Interleukin-1, signaling. Following activation of viral RNA sensors, such as RIG-I-like receptors, associates with DDX3X and phosphorylates interferon regulatory factors (IRFs), IRF3 and IRF7, as well as DDX3X. This activity allows subsequent homodimerization and nuclear translocation of the IRF3 leading to transcriptional activation of pro-inflammatory and antiviral genes including IFNB. In order to establish such an antiviral state, IKBKE forms several different complexes whose composition depends on the type of cell and cellular stimuli. Thus, several scaffolding molecules including IPS1/MAVS, TANK, AZI2/NAP1 or TBKBP1/SINTBAD can be recruited to the IKBKE-containing-complexes. Activated by polyubiquitination in response to TNFA and interleukin-1, regulates the NF-kappa-B signaling pathway through, at least, the phosphorylation of CYLD. Phosphorylates inhibitors of NF-kappa-B thus leading to the dissociation of the inhibitor/NF-kappa-B complex and ultimately the degradation of the inhibitor. In addition, is also required for the induction of a subset of ISGs which displays antiviral activity, may be through the phosphorylation of STAT1 at 'Ser-708'. Phosphorylation of STAT1 at 'Ser-708' also seems to promote the assembly and DNA binding of ISGF3 (STAT1:STAT2:IRF9) complexes compared to GAF (STAT1:STAT1) complexes, in this way regulating the balance between type I and type II IFN responses. Protects cells against DNA damage-induced cell death. Also plays an important role in energy balance regulation by sustaining a state of chronic, low-grade inflammation in obesity, wich leads to a negative impact on insulin sensitivity. Phosphorylates AKT1.</text>
</comment>
<comment type="catalytic activity">
    <reaction>
        <text>L-seryl-[I-kappa-B protein] + ATP = O-phospho-L-seryl-[I-kappa-B protein] + ADP + H(+)</text>
        <dbReference type="Rhea" id="RHEA:19073"/>
        <dbReference type="Rhea" id="RHEA-COMP:13698"/>
        <dbReference type="Rhea" id="RHEA-COMP:13699"/>
        <dbReference type="ChEBI" id="CHEBI:15378"/>
        <dbReference type="ChEBI" id="CHEBI:29999"/>
        <dbReference type="ChEBI" id="CHEBI:30616"/>
        <dbReference type="ChEBI" id="CHEBI:83421"/>
        <dbReference type="ChEBI" id="CHEBI:456216"/>
        <dbReference type="EC" id="2.7.11.10"/>
    </reaction>
</comment>
<comment type="subunit">
    <text evidence="3 4 5 6 8 9 11 12 14 15 19 20 22 23 24 25 27 28">Homodimer. Interacts with MAVS/IPS1 (PubMed:16177806, PubMed:27980081, PubMed:28011935). Interacts (via protein kinase domain) with TTLL12 (via N-terminus); the interaction prevents MAVS binding to IKBKE (PubMed:28011935). Interacts with the adapter proteins AZI2/NAP1, TANK and TBKBP1/SINTBAD (PubMed:17568778). Interacts with SIKE1 (PubMed:14560022, PubMed:16281057). Interacts with TICAM1/TRIF, IRF3 and RIGI; interactions are disrupted by the interaction between IKBKE and SIKE1 (PubMed:14739303, PubMed:16281057, PubMed:23478265). Interacts with TOPORS; induced by DNA damage (PubMed:20188669). Interacts with CYLD (PubMed:18636086). Interacts (when polyubiquitinated) with IKBKB, IKBKG and MYD88 (PubMed:23453969). Interacts with IFIH1 (PubMed:17600090). Interacts with DDX3X; the interaction may be induced upon virus infection (PubMed:18636090, PubMed:20657822, PubMed:23478265, PubMed:27980081). Interacts with TRIM6 (via SPRY box) (PubMed:24882218). Interacts with unanchored K48-linked polyubiquitin chains; this leads to IKBKE activation (PubMed:24882218). Interacts with TBK1 (PubMed:29251827). Interacts with FKBP5 (PubMed:26101251, PubMed:31434731).</text>
</comment>
<comment type="subunit">
    <text evidence="18">(Microbial infection) Interacts (via Protein kinase domain) with arenavirus protein N; the interaction inhibits IKBKE kinase function.</text>
</comment>
<comment type="subunit">
    <text evidence="13">(Microbial infection) Interacts with Ebola virus protein VP35; the interaction leads to inhibition of cellular antiviral response by blocking necessary interactions between the IKBKE and MAVS/IPS as well as its substrates IRF3 and IRF7.</text>
</comment>
<comment type="subunit">
    <text evidence="21">(Microbial infection) Interacts with Severe fever with thrombocytopenia virus (SFTSV) NSs; this interaction this interaction sequesters IKBKE in NSs-induced cytoplasmic inclusion bodies thereby inhibiting the IFN responses.</text>
</comment>
<comment type="subunit">
    <text evidence="26">(Microbial infection) Interacts with human T-cell leukemia virus 1/HTLV-1 protein HBZ.</text>
</comment>
<comment type="subunit">
    <text evidence="29">(Microbial infection) Interacts with Epstein-Barr virus (EBV) protein NEC2/BFRF1; this interaction inhibits IKBKE kinase activity and IRF3 nuclear translocation.</text>
</comment>
<comment type="interaction">
    <interactant intactId="EBI-307369">
        <id>Q14164</id>
    </interactant>
    <interactant intactId="EBI-743771">
        <id>Q92624</id>
        <label>APPBP2</label>
    </interactant>
    <organismsDiffer>false</organismsDiffer>
    <experiments>4</experiments>
</comment>
<comment type="interaction">
    <interactant intactId="EBI-307369">
        <id>Q14164</id>
    </interactant>
    <interactant intactId="EBI-295634">
        <id>Q16543</id>
        <label>CDC37</label>
    </interactant>
    <organismsDiffer>false</organismsDiffer>
    <experiments>3</experiments>
</comment>
<comment type="interaction">
    <interactant intactId="EBI-307369">
        <id>Q14164</id>
    </interactant>
    <interactant intactId="EBI-353779">
        <id>O00571</id>
        <label>DDX3X</label>
    </interactant>
    <organismsDiffer>false</organismsDiffer>
    <experiments>4</experiments>
</comment>
<comment type="interaction">
    <interactant intactId="EBI-307369">
        <id>Q14164</id>
    </interactant>
    <interactant intactId="EBI-352572">
        <id>P08238</id>
        <label>HSP90AB1</label>
    </interactant>
    <organismsDiffer>false</organismsDiffer>
    <experiments>2</experiments>
</comment>
<comment type="interaction">
    <interactant intactId="EBI-307369">
        <id>Q14164</id>
    </interactant>
    <interactant intactId="EBI-6115771">
        <id>Q9BYX4</id>
        <label>IFIH1</label>
    </interactant>
    <organismsDiffer>false</organismsDiffer>
    <experiments>2</experiments>
</comment>
<comment type="interaction">
    <interactant intactId="EBI-307369">
        <id>Q14164</id>
    </interactant>
    <interactant intactId="EBI-2650369">
        <id>Q14653</id>
        <label>IRF3</label>
    </interactant>
    <organismsDiffer>false</organismsDiffer>
    <experiments>2</experiments>
</comment>
<comment type="interaction">
    <interactant intactId="EBI-307369">
        <id>Q14164</id>
    </interactant>
    <interactant intactId="EBI-995373">
        <id>Q7Z434</id>
        <label>MAVS</label>
    </interactant>
    <organismsDiffer>false</organismsDiffer>
    <experiments>4</experiments>
</comment>
<comment type="interaction">
    <interactant intactId="EBI-307369">
        <id>Q14164</id>
    </interactant>
    <interactant intactId="EBI-356349">
        <id>Q92844</id>
        <label>TANK</label>
    </interactant>
    <organismsDiffer>false</organismsDiffer>
    <experiments>5</experiments>
</comment>
<comment type="interaction">
    <interactant intactId="EBI-307369">
        <id>Q14164</id>
    </interactant>
    <interactant intactId="EBI-356402">
        <id>Q9UHD2</id>
        <label>TBK1</label>
    </interactant>
    <organismsDiffer>false</organismsDiffer>
    <experiments>5</experiments>
</comment>
<comment type="interaction">
    <interactant intactId="EBI-307369">
        <id>Q14164</id>
    </interactant>
    <interactant intactId="EBI-359969">
        <id>A7MCY6</id>
        <label>TBKBP1</label>
    </interactant>
    <organismsDiffer>false</organismsDiffer>
    <experiments>4</experiments>
</comment>
<comment type="interaction">
    <interactant intactId="EBI-307369">
        <id>Q14164</id>
    </interactant>
    <interactant intactId="EBI-714860">
        <id>P09936</id>
        <label>UCHL1</label>
    </interactant>
    <organismsDiffer>false</organismsDiffer>
    <experiments>3</experiments>
</comment>
<comment type="interaction">
    <interactant intactId="EBI-307369">
        <id>Q14164</id>
    </interactant>
    <interactant intactId="EBI-356498">
        <id>P62258</id>
        <label>YWHAE</label>
    </interactant>
    <organismsDiffer>false</organismsDiffer>
    <experiments>2</experiments>
</comment>
<comment type="interaction">
    <interactant intactId="EBI-307369">
        <id>Q14164</id>
    </interactant>
    <interactant intactId="EBI-6148294">
        <id>Q05127</id>
        <label>VP35</label>
    </interactant>
    <organismsDiffer>true</organismsDiffer>
    <experiments>3</experiments>
</comment>
<comment type="interaction">
    <interactant intactId="EBI-307369">
        <id>Q14164</id>
    </interactant>
    <interactant intactId="EBI-8788634">
        <id>K7Y1A2</id>
    </interactant>
    <organismsDiffer>true</organismsDiffer>
    <experiments>2</experiments>
</comment>
<comment type="interaction">
    <interactant intactId="EBI-307369">
        <id>Q14164</id>
    </interactant>
    <interactant intactId="EBI-6919131">
        <id>PRO_0000037572</id>
        <dbReference type="UniProtKB" id="P27958"/>
    </interactant>
    <organismsDiffer>true</organismsDiffer>
    <experiments>2</experiments>
</comment>
<comment type="subcellular location">
    <subcellularLocation>
        <location evidence="22">Cytoplasm</location>
    </subcellularLocation>
    <subcellularLocation>
        <location>Nucleus</location>
    </subcellularLocation>
    <subcellularLocation>
        <location evidence="14">Nucleus</location>
        <location evidence="14">PML body</location>
    </subcellularLocation>
    <text evidence="14 22">Targeting to PML nuclear bodies upon DNA damage is TOPORS-dependent (PubMed:20188669). Located diffusely throughout the cytoplasm but locates to punctate cytoplasmic bodies when coexpressed with TRIM6 (PubMed:24882218).</text>
</comment>
<comment type="alternative products">
    <event type="alternative splicing"/>
    <isoform>
        <id>Q14164-1</id>
        <name>1</name>
        <sequence type="displayed"/>
    </isoform>
    <isoform>
        <id>Q14164-2</id>
        <name>2</name>
        <sequence type="described" ref="VSP_044305"/>
    </isoform>
</comment>
<comment type="tissue specificity">
    <text>Highly expressed in spleen followed by thymus, peripheral blood leukocytes, pancreas, placenta. Weakly expressed in lung, kidney, prostate, ovary and colon.</text>
</comment>
<comment type="induction">
    <text evidence="19">Induced by lipopolysaccharide (LPS) and TNFA.</text>
</comment>
<comment type="PTM">
    <text evidence="16 20">Autophosphorylated and phosphorylated by IKBKB/IKKB. Phosphorylation at Ser-172 is enhanced by the interaction with DDX3X. Phosphorylated at Thr-501 upon IFN activation.</text>
</comment>
<comment type="PTM">
    <text evidence="14">Sumoylation by TOPORS upon DNA damage is required for protection of cells against DNA damage-induced cell death. Desumoylated by SENP1.</text>
</comment>
<comment type="PTM">
    <text evidence="19">'Lys-63'-linked polyubiquitinated at Lys-30 and Lys-401 by TRAF2:BIRC2 and TRAF2:BIRC3 complexes. Ubiquitination is induced by LPS, TNFA and interleukin-1 and required for full kinase activity and KF-kappa-B pathway activation.</text>
</comment>
<comment type="similarity">
    <text evidence="1">Belongs to the protein kinase superfamily. Ser/Thr protein kinase family. I-kappa-B kinase subfamily.</text>
</comment>
<comment type="sequence caution" evidence="32">
    <conflict type="erroneous initiation">
        <sequence resource="EMBL-CDS" id="BAA09772"/>
    </conflict>
    <text>Extended N-terminus.</text>
</comment>
<evidence type="ECO:0000255" key="1">
    <source>
        <dbReference type="PROSITE-ProRule" id="PRU00159"/>
    </source>
</evidence>
<evidence type="ECO:0000269" key="2">
    <source>
    </source>
</evidence>
<evidence type="ECO:0000269" key="3">
    <source>
    </source>
</evidence>
<evidence type="ECO:0000269" key="4">
    <source>
    </source>
</evidence>
<evidence type="ECO:0000269" key="5">
    <source>
    </source>
</evidence>
<evidence type="ECO:0000269" key="6">
    <source>
    </source>
</evidence>
<evidence type="ECO:0000269" key="7">
    <source>
    </source>
</evidence>
<evidence type="ECO:0000269" key="8">
    <source>
    </source>
</evidence>
<evidence type="ECO:0000269" key="9">
    <source>
    </source>
</evidence>
<evidence type="ECO:0000269" key="10">
    <source>
    </source>
</evidence>
<evidence type="ECO:0000269" key="11">
    <source>
    </source>
</evidence>
<evidence type="ECO:0000269" key="12">
    <source>
    </source>
</evidence>
<evidence type="ECO:0000269" key="13">
    <source>
    </source>
</evidence>
<evidence type="ECO:0000269" key="14">
    <source>
    </source>
</evidence>
<evidence type="ECO:0000269" key="15">
    <source>
    </source>
</evidence>
<evidence type="ECO:0000269" key="16">
    <source>
    </source>
</evidence>
<evidence type="ECO:0000269" key="17">
    <source>
    </source>
</evidence>
<evidence type="ECO:0000269" key="18">
    <source>
    </source>
</evidence>
<evidence type="ECO:0000269" key="19">
    <source>
    </source>
</evidence>
<evidence type="ECO:0000269" key="20">
    <source>
    </source>
</evidence>
<evidence type="ECO:0000269" key="21">
    <source>
    </source>
</evidence>
<evidence type="ECO:0000269" key="22">
    <source>
    </source>
</evidence>
<evidence type="ECO:0000269" key="23">
    <source>
    </source>
</evidence>
<evidence type="ECO:0000269" key="24">
    <source>
    </source>
</evidence>
<evidence type="ECO:0000269" key="25">
    <source>
    </source>
</evidence>
<evidence type="ECO:0000269" key="26">
    <source>
    </source>
</evidence>
<evidence type="ECO:0000269" key="27">
    <source>
    </source>
</evidence>
<evidence type="ECO:0000269" key="28">
    <source>
    </source>
</evidence>
<evidence type="ECO:0000269" key="29">
    <source>
    </source>
</evidence>
<evidence type="ECO:0000269" key="30">
    <source ref="4"/>
</evidence>
<evidence type="ECO:0000303" key="31">
    <source>
    </source>
</evidence>
<evidence type="ECO:0000305" key="32"/>
<evidence type="ECO:0007744" key="33">
    <source>
    </source>
</evidence>
<dbReference type="EC" id="2.7.11.10"/>
<dbReference type="EMBL" id="D63485">
    <property type="protein sequence ID" value="BAA09772.2"/>
    <property type="status" value="ALT_INIT"/>
    <property type="molecule type" value="mRNA"/>
</dbReference>
<dbReference type="EMBL" id="AB016590">
    <property type="protein sequence ID" value="BAA85155.1"/>
    <property type="molecule type" value="mRNA"/>
</dbReference>
<dbReference type="EMBL" id="AF241789">
    <property type="protein sequence ID" value="AAF45307.1"/>
    <property type="molecule type" value="mRNA"/>
</dbReference>
<dbReference type="EMBL" id="DQ667176">
    <property type="protein sequence ID" value="ABG25921.1"/>
    <property type="molecule type" value="Genomic_DNA"/>
</dbReference>
<dbReference type="EMBL" id="AL354681">
    <property type="protein sequence ID" value="CAI15250.1"/>
    <property type="molecule type" value="Genomic_DNA"/>
</dbReference>
<dbReference type="EMBL" id="CH471100">
    <property type="protein sequence ID" value="EAW93549.1"/>
    <property type="molecule type" value="Genomic_DNA"/>
</dbReference>
<dbReference type="EMBL" id="BC105923">
    <property type="protein sequence ID" value="AAI05924.1"/>
    <property type="molecule type" value="mRNA"/>
</dbReference>
<dbReference type="EMBL" id="BC105924">
    <property type="protein sequence ID" value="AAI05925.1"/>
    <property type="molecule type" value="mRNA"/>
</dbReference>
<dbReference type="EMBL" id="BC107812">
    <property type="protein sequence ID" value="AAI07813.1"/>
    <property type="molecule type" value="mRNA"/>
</dbReference>
<dbReference type="CCDS" id="CCDS30996.1">
    <molecule id="Q14164-1"/>
</dbReference>
<dbReference type="CCDS" id="CCDS53464.1">
    <molecule id="Q14164-2"/>
</dbReference>
<dbReference type="RefSeq" id="NP_001180250.1">
    <molecule id="Q14164-2"/>
    <property type="nucleotide sequence ID" value="NM_001193321.2"/>
</dbReference>
<dbReference type="RefSeq" id="NP_001180251.1">
    <property type="nucleotide sequence ID" value="NM_001193322.1"/>
</dbReference>
<dbReference type="RefSeq" id="NP_054721.1">
    <molecule id="Q14164-1"/>
    <property type="nucleotide sequence ID" value="NM_014002.4"/>
</dbReference>
<dbReference type="RefSeq" id="XP_005273413.1">
    <molecule id="Q14164-1"/>
    <property type="nucleotide sequence ID" value="XM_005273356.3"/>
</dbReference>
<dbReference type="SMR" id="Q14164"/>
<dbReference type="BioGRID" id="115000">
    <property type="interactions" value="107"/>
</dbReference>
<dbReference type="ComplexPortal" id="CPX-6038">
    <property type="entry name" value="TBK1-IKKepsilon-NAP1 complex"/>
</dbReference>
<dbReference type="ComplexPortal" id="CPX-6089">
    <property type="entry name" value="TBK1-IKKepsilon-TANK complex"/>
</dbReference>
<dbReference type="ComplexPortal" id="CPX-6090">
    <property type="entry name" value="TBK1-IKKepsilon-SINTBAD complex"/>
</dbReference>
<dbReference type="CORUM" id="Q14164"/>
<dbReference type="DIP" id="DIP-27530N"/>
<dbReference type="FunCoup" id="Q14164">
    <property type="interactions" value="1709"/>
</dbReference>
<dbReference type="IntAct" id="Q14164">
    <property type="interactions" value="55"/>
</dbReference>
<dbReference type="MINT" id="Q14164"/>
<dbReference type="STRING" id="9606.ENSP00000464030"/>
<dbReference type="BindingDB" id="Q14164"/>
<dbReference type="ChEMBL" id="CHEMBL3529"/>
<dbReference type="DrugBank" id="DB12010">
    <property type="generic name" value="Fostamatinib"/>
</dbReference>
<dbReference type="DrugCentral" id="Q14164"/>
<dbReference type="GuidetoPHARMACOLOGY" id="2040"/>
<dbReference type="GlyGen" id="Q14164">
    <property type="glycosylation" value="1 site, 1 N-linked glycan (1 site)"/>
</dbReference>
<dbReference type="iPTMnet" id="Q14164"/>
<dbReference type="PhosphoSitePlus" id="Q14164"/>
<dbReference type="BioMuta" id="IKBKE"/>
<dbReference type="DMDM" id="14548079"/>
<dbReference type="CPTAC" id="CPTAC-2829"/>
<dbReference type="CPTAC" id="CPTAC-2885"/>
<dbReference type="jPOST" id="Q14164"/>
<dbReference type="MassIVE" id="Q14164"/>
<dbReference type="PaxDb" id="9606-ENSP00000464030"/>
<dbReference type="PeptideAtlas" id="Q14164"/>
<dbReference type="ProteomicsDB" id="59892">
    <molecule id="Q14164-1"/>
</dbReference>
<dbReference type="ProteomicsDB" id="61647"/>
<dbReference type="Antibodypedia" id="73513">
    <property type="antibodies" value="618 antibodies from 45 providers"/>
</dbReference>
<dbReference type="DNASU" id="9641"/>
<dbReference type="Ensembl" id="ENST00000581977.7">
    <molecule id="Q14164-1"/>
    <property type="protein sequence ID" value="ENSP00000464030.1"/>
    <property type="gene ID" value="ENSG00000263528.8"/>
</dbReference>
<dbReference type="Ensembl" id="ENST00000584998.5">
    <molecule id="Q14164-2"/>
    <property type="protein sequence ID" value="ENSP00000462396.1"/>
    <property type="gene ID" value="ENSG00000263528.8"/>
</dbReference>
<dbReference type="GeneID" id="9641"/>
<dbReference type="KEGG" id="hsa:9641"/>
<dbReference type="MANE-Select" id="ENST00000581977.7">
    <property type="protein sequence ID" value="ENSP00000464030.1"/>
    <property type="RefSeq nucleotide sequence ID" value="NM_014002.4"/>
    <property type="RefSeq protein sequence ID" value="NP_054721.1"/>
</dbReference>
<dbReference type="UCSC" id="uc001hdz.3">
    <molecule id="Q14164-1"/>
    <property type="organism name" value="human"/>
</dbReference>
<dbReference type="AGR" id="HGNC:14552"/>
<dbReference type="CTD" id="9641"/>
<dbReference type="DisGeNET" id="9641"/>
<dbReference type="GeneCards" id="IKBKE"/>
<dbReference type="HGNC" id="HGNC:14552">
    <property type="gene designation" value="IKBKE"/>
</dbReference>
<dbReference type="HPA" id="ENSG00000263528">
    <property type="expression patterns" value="Tissue enhanced (lymphoid)"/>
</dbReference>
<dbReference type="MalaCards" id="IKBKE"/>
<dbReference type="MIM" id="605048">
    <property type="type" value="gene"/>
</dbReference>
<dbReference type="neXtProt" id="NX_Q14164"/>
<dbReference type="OpenTargets" id="ENSG00000263528"/>
<dbReference type="PharmGKB" id="PA134962294"/>
<dbReference type="VEuPathDB" id="HostDB:ENSG00000263528"/>
<dbReference type="eggNOG" id="KOG4250">
    <property type="taxonomic scope" value="Eukaryota"/>
</dbReference>
<dbReference type="GeneTree" id="ENSGT00950000182937"/>
<dbReference type="InParanoid" id="Q14164"/>
<dbReference type="OMA" id="AEQAKCW"/>
<dbReference type="OrthoDB" id="10013850at2759"/>
<dbReference type="PAN-GO" id="Q14164">
    <property type="GO annotations" value="3 GO annotations based on evolutionary models"/>
</dbReference>
<dbReference type="PhylomeDB" id="Q14164"/>
<dbReference type="TreeFam" id="TF324269"/>
<dbReference type="BRENDA" id="2.7.11.10">
    <property type="organism ID" value="2681"/>
</dbReference>
<dbReference type="PathwayCommons" id="Q14164"/>
<dbReference type="Reactome" id="R-HSA-4755510">
    <property type="pathway name" value="SUMOylation of immune response proteins"/>
</dbReference>
<dbReference type="Reactome" id="R-HSA-5357786">
    <property type="pathway name" value="TNFR1-induced proapoptotic signaling"/>
</dbReference>
<dbReference type="Reactome" id="R-HSA-5357905">
    <property type="pathway name" value="Regulation of TNFR1 signaling"/>
</dbReference>
<dbReference type="Reactome" id="R-HSA-9013973">
    <property type="pathway name" value="TICAM1-dependent activation of IRF3/IRF7"/>
</dbReference>
<dbReference type="Reactome" id="R-HSA-918233">
    <property type="pathway name" value="TRAF3-dependent IRF activation pathway"/>
</dbReference>
<dbReference type="Reactome" id="R-HSA-933541">
    <property type="pathway name" value="TRAF6 mediated IRF7 activation"/>
</dbReference>
<dbReference type="Reactome" id="R-HSA-936440">
    <property type="pathway name" value="Negative regulators of DDX58/IFIH1 signaling"/>
</dbReference>
<dbReference type="Reactome" id="R-HSA-936964">
    <property type="pathway name" value="Activation of IRF3, IRF7 mediated by TBK1, IKKEpsilon (IKBKE)"/>
</dbReference>
<dbReference type="Reactome" id="R-HSA-9692916">
    <property type="pathway name" value="SARS-CoV-1 activates/modulates innate immune responses"/>
</dbReference>
<dbReference type="Reactome" id="R-HSA-9705671">
    <property type="pathway name" value="SARS-CoV-2 activates/modulates innate and adaptive immune responses"/>
</dbReference>
<dbReference type="Reactome" id="R-HSA-9824878">
    <property type="pathway name" value="Regulation of TBK1, IKKEpsilon (IKBKE)-mediated activation of IRF3, IRF7"/>
</dbReference>
<dbReference type="Reactome" id="R-HSA-9828211">
    <property type="pathway name" value="Regulation of TBK1, IKKEpsilon-mediated activation of IRF3, IRF7 upon TLR3 ligation"/>
</dbReference>
<dbReference type="Reactome" id="R-HSA-9860927">
    <property type="pathway name" value="Turbulent (oscillatory, disturbed) flow shear stress activates signaling by PIEZO1 and integrins in endothelial cells"/>
</dbReference>
<dbReference type="SABIO-RK" id="Q14164"/>
<dbReference type="SignaLink" id="Q14164"/>
<dbReference type="SIGNOR" id="Q14164"/>
<dbReference type="BioGRID-ORCS" id="9641">
    <property type="hits" value="22 hits in 1196 CRISPR screens"/>
</dbReference>
<dbReference type="CD-CODE" id="B5B9A610">
    <property type="entry name" value="PML body"/>
</dbReference>
<dbReference type="ChiTaRS" id="IKBKE">
    <property type="organism name" value="human"/>
</dbReference>
<dbReference type="GeneWiki" id="IKBKE"/>
<dbReference type="GenomeRNAi" id="9641"/>
<dbReference type="Pharos" id="Q14164">
    <property type="development level" value="Tchem"/>
</dbReference>
<dbReference type="PRO" id="PR:Q14164"/>
<dbReference type="Proteomes" id="UP000005640">
    <property type="component" value="Chromosome 1"/>
</dbReference>
<dbReference type="RNAct" id="Q14164">
    <property type="molecule type" value="protein"/>
</dbReference>
<dbReference type="Bgee" id="ENSG00000263528">
    <property type="expression patterns" value="Expressed in colonic epithelium and 123 other cell types or tissues"/>
</dbReference>
<dbReference type="ExpressionAtlas" id="Q14164">
    <property type="expression patterns" value="baseline and differential"/>
</dbReference>
<dbReference type="GO" id="GO:0005737">
    <property type="term" value="C:cytoplasm"/>
    <property type="evidence" value="ECO:0000314"/>
    <property type="project" value="UniProtKB"/>
</dbReference>
<dbReference type="GO" id="GO:0005829">
    <property type="term" value="C:cytosol"/>
    <property type="evidence" value="ECO:0000304"/>
    <property type="project" value="Reactome"/>
</dbReference>
<dbReference type="GO" id="GO:0031966">
    <property type="term" value="C:mitochondrial membrane"/>
    <property type="evidence" value="ECO:0000315"/>
    <property type="project" value="AgBase"/>
</dbReference>
<dbReference type="GO" id="GO:0005654">
    <property type="term" value="C:nucleoplasm"/>
    <property type="evidence" value="ECO:0000304"/>
    <property type="project" value="Reactome"/>
</dbReference>
<dbReference type="GO" id="GO:0005634">
    <property type="term" value="C:nucleus"/>
    <property type="evidence" value="ECO:0000314"/>
    <property type="project" value="UniProtKB"/>
</dbReference>
<dbReference type="GO" id="GO:0016605">
    <property type="term" value="C:PML body"/>
    <property type="evidence" value="ECO:0000314"/>
    <property type="project" value="UniProtKB"/>
</dbReference>
<dbReference type="GO" id="GO:1902554">
    <property type="term" value="C:serine/threonine protein kinase complex"/>
    <property type="evidence" value="ECO:0000303"/>
    <property type="project" value="ComplexPortal"/>
</dbReference>
<dbReference type="GO" id="GO:0005524">
    <property type="term" value="F:ATP binding"/>
    <property type="evidence" value="ECO:0007669"/>
    <property type="project" value="UniProtKB-KW"/>
</dbReference>
<dbReference type="GO" id="GO:0042802">
    <property type="term" value="F:identical protein binding"/>
    <property type="evidence" value="ECO:0000353"/>
    <property type="project" value="UniProtKB"/>
</dbReference>
<dbReference type="GO" id="GO:0008384">
    <property type="term" value="F:IkappaB kinase activity"/>
    <property type="evidence" value="ECO:0007669"/>
    <property type="project" value="UniProtKB-EC"/>
</dbReference>
<dbReference type="GO" id="GO:0036435">
    <property type="term" value="F:K48-linked polyubiquitin modification-dependent protein binding"/>
    <property type="evidence" value="ECO:0000315"/>
    <property type="project" value="UniProtKB"/>
</dbReference>
<dbReference type="GO" id="GO:0019903">
    <property type="term" value="F:protein phosphatase binding"/>
    <property type="evidence" value="ECO:0000250"/>
    <property type="project" value="ARUK-UCL"/>
</dbReference>
<dbReference type="GO" id="GO:0004674">
    <property type="term" value="F:protein serine/threonine kinase activity"/>
    <property type="evidence" value="ECO:0000314"/>
    <property type="project" value="UniProtKB"/>
</dbReference>
<dbReference type="GO" id="GO:0031625">
    <property type="term" value="F:ubiquitin protein ligase binding"/>
    <property type="evidence" value="ECO:0000353"/>
    <property type="project" value="UniProtKB"/>
</dbReference>
<dbReference type="GO" id="GO:0002218">
    <property type="term" value="P:activation of innate immune response"/>
    <property type="evidence" value="ECO:0000318"/>
    <property type="project" value="GO_Central"/>
</dbReference>
<dbReference type="GO" id="GO:0098586">
    <property type="term" value="P:cellular response to virus"/>
    <property type="evidence" value="ECO:0007669"/>
    <property type="project" value="Ensembl"/>
</dbReference>
<dbReference type="GO" id="GO:0051607">
    <property type="term" value="P:defense response to virus"/>
    <property type="evidence" value="ECO:0000303"/>
    <property type="project" value="ComplexPortal"/>
</dbReference>
<dbReference type="GO" id="GO:0010467">
    <property type="term" value="P:gene expression"/>
    <property type="evidence" value="ECO:0007669"/>
    <property type="project" value="Ensembl"/>
</dbReference>
<dbReference type="GO" id="GO:0006955">
    <property type="term" value="P:immune response"/>
    <property type="evidence" value="ECO:0000303"/>
    <property type="project" value="UniProtKB"/>
</dbReference>
<dbReference type="GO" id="GO:0097400">
    <property type="term" value="P:interleukin-17-mediated signaling pathway"/>
    <property type="evidence" value="ECO:0007669"/>
    <property type="project" value="Ensembl"/>
</dbReference>
<dbReference type="GO" id="GO:0008630">
    <property type="term" value="P:intrinsic apoptotic signaling pathway in response to DNA damage"/>
    <property type="evidence" value="ECO:0000315"/>
    <property type="project" value="UniProtKB"/>
</dbReference>
<dbReference type="GO" id="GO:0048255">
    <property type="term" value="P:mRNA stabilization"/>
    <property type="evidence" value="ECO:0007669"/>
    <property type="project" value="Ensembl"/>
</dbReference>
<dbReference type="GO" id="GO:0043123">
    <property type="term" value="P:positive regulation of canonical NF-kappaB signal transduction"/>
    <property type="evidence" value="ECO:0000314"/>
    <property type="project" value="GO_Central"/>
</dbReference>
<dbReference type="GO" id="GO:0010884">
    <property type="term" value="P:positive regulation of lipid storage"/>
    <property type="evidence" value="ECO:0000250"/>
    <property type="project" value="BHF-UCL"/>
</dbReference>
<dbReference type="GO" id="GO:0032481">
    <property type="term" value="P:positive regulation of type I interferon production"/>
    <property type="evidence" value="ECO:0000314"/>
    <property type="project" value="UniProt"/>
</dbReference>
<dbReference type="GO" id="GO:0060340">
    <property type="term" value="P:positive regulation of type I interferon-mediated signaling pathway"/>
    <property type="evidence" value="ECO:0000314"/>
    <property type="project" value="UniProt"/>
</dbReference>
<dbReference type="GO" id="GO:0043254">
    <property type="term" value="P:regulation of protein-containing complex assembly"/>
    <property type="evidence" value="ECO:0007669"/>
    <property type="project" value="Ensembl"/>
</dbReference>
<dbReference type="GO" id="GO:0035456">
    <property type="term" value="P:response to interferon-beta"/>
    <property type="evidence" value="ECO:0000315"/>
    <property type="project" value="UniProtKB"/>
</dbReference>
<dbReference type="GO" id="GO:0060337">
    <property type="term" value="P:type I interferon-mediated signaling pathway"/>
    <property type="evidence" value="ECO:0000303"/>
    <property type="project" value="ComplexPortal"/>
</dbReference>
<dbReference type="CDD" id="cd17128">
    <property type="entry name" value="Ubl_IKKE"/>
    <property type="match status" value="1"/>
</dbReference>
<dbReference type="FunFam" id="1.20.1270.420:FF:000002">
    <property type="entry name" value="Inhibitor of nuclear factor kappa B kinase subunit epsilon"/>
    <property type="match status" value="1"/>
</dbReference>
<dbReference type="FunFam" id="3.10.20.90:FF:000147">
    <property type="entry name" value="Inhibitor of nuclear factor kappa B kinase subunit epsilon"/>
    <property type="match status" value="1"/>
</dbReference>
<dbReference type="FunFam" id="1.10.510.10:FF:000100">
    <property type="entry name" value="inhibitor of nuclear factor kappa-B kinase subunit epsilon"/>
    <property type="match status" value="1"/>
</dbReference>
<dbReference type="FunFam" id="3.30.200.20:FF:000106">
    <property type="entry name" value="serine/threonine-protein kinase TBK1 isoform X1"/>
    <property type="match status" value="1"/>
</dbReference>
<dbReference type="Gene3D" id="1.20.1270.420">
    <property type="match status" value="1"/>
</dbReference>
<dbReference type="Gene3D" id="3.10.20.90">
    <property type="entry name" value="Phosphatidylinositol 3-kinase Catalytic Subunit, Chain A, domain 1"/>
    <property type="match status" value="1"/>
</dbReference>
<dbReference type="Gene3D" id="3.30.200.20">
    <property type="entry name" value="Phosphorylase Kinase, domain 1"/>
    <property type="match status" value="1"/>
</dbReference>
<dbReference type="Gene3D" id="1.10.510.10">
    <property type="entry name" value="Transferase(Phosphotransferase) domain 1"/>
    <property type="match status" value="1"/>
</dbReference>
<dbReference type="InterPro" id="IPR051180">
    <property type="entry name" value="IKK"/>
</dbReference>
<dbReference type="InterPro" id="IPR011009">
    <property type="entry name" value="Kinase-like_dom_sf"/>
</dbReference>
<dbReference type="InterPro" id="IPR000719">
    <property type="entry name" value="Prot_kinase_dom"/>
</dbReference>
<dbReference type="InterPro" id="IPR017441">
    <property type="entry name" value="Protein_kinase_ATP_BS"/>
</dbReference>
<dbReference type="InterPro" id="IPR041309">
    <property type="entry name" value="TBK1_CCD1"/>
</dbReference>
<dbReference type="InterPro" id="IPR041087">
    <property type="entry name" value="TBK1_ULD"/>
</dbReference>
<dbReference type="PANTHER" id="PTHR22969">
    <property type="entry name" value="IKB KINASE"/>
    <property type="match status" value="1"/>
</dbReference>
<dbReference type="PANTHER" id="PTHR22969:SF10">
    <property type="entry name" value="INHIBITOR OF NUCLEAR FACTOR KAPPA-B KINASE SUBUNIT EPSILON"/>
    <property type="match status" value="1"/>
</dbReference>
<dbReference type="Pfam" id="PF00069">
    <property type="entry name" value="Pkinase"/>
    <property type="match status" value="1"/>
</dbReference>
<dbReference type="Pfam" id="PF18394">
    <property type="entry name" value="TBK1_CCD1"/>
    <property type="match status" value="1"/>
</dbReference>
<dbReference type="Pfam" id="PF18396">
    <property type="entry name" value="TBK1_ULD"/>
    <property type="match status" value="1"/>
</dbReference>
<dbReference type="SMART" id="SM00220">
    <property type="entry name" value="S_TKc"/>
    <property type="match status" value="1"/>
</dbReference>
<dbReference type="SUPFAM" id="SSF56112">
    <property type="entry name" value="Protein kinase-like (PK-like)"/>
    <property type="match status" value="1"/>
</dbReference>
<dbReference type="PROSITE" id="PS00107">
    <property type="entry name" value="PROTEIN_KINASE_ATP"/>
    <property type="match status" value="1"/>
</dbReference>
<dbReference type="PROSITE" id="PS50011">
    <property type="entry name" value="PROTEIN_KINASE_DOM"/>
    <property type="match status" value="1"/>
</dbReference>
<accession>Q14164</accession>
<accession>D3DT78</accession>
<accession>Q3B754</accession>
<accession>Q3KR43</accession>
<accession>Q5JTS6</accession>
<gene>
    <name type="primary">IKBKE</name>
    <name type="synonym">IKKE</name>
    <name type="synonym">IKKI</name>
    <name type="synonym">KIAA0151</name>
</gene>
<reference key="1">
    <citation type="journal article" date="1999" name="Int. Immunol.">
        <title>IKK-i, a novel lipopolysaccharide-inducible kinase that is related to IkappaB kinases.</title>
        <authorList>
            <person name="Shimada T."/>
            <person name="Kawai T."/>
            <person name="Takeda K."/>
            <person name="Matsumoto M."/>
            <person name="Inoue J."/>
            <person name="Tatsumi Y."/>
            <person name="Kanamaru A."/>
            <person name="Akira S."/>
        </authorList>
    </citation>
    <scope>NUCLEOTIDE SEQUENCE [MRNA] (ISOFORM 1)</scope>
    <scope>MUTAGENESIS OF LYS-38; GLU-168 AND SER-172</scope>
</reference>
<reference key="2">
    <citation type="journal article" date="2000" name="Mol. Cell">
        <title>IKK epsilon is part of a novel PMA-inducible IkappaB kinase complex.</title>
        <authorList>
            <person name="Peters R.T."/>
            <person name="Liao S.-M."/>
            <person name="Maniatis T."/>
        </authorList>
    </citation>
    <scope>NUCLEOTIDE SEQUENCE [MRNA] (ISOFORM 1)</scope>
    <source>
        <tissue>Leukocyte</tissue>
    </source>
</reference>
<reference key="3">
    <citation type="journal article" date="1995" name="DNA Res.">
        <title>Prediction of the coding sequences of unidentified human genes. IV. The coding sequences of 40 new genes (KIAA0121-KIAA0160) deduced by analysis of cDNA clones from human cell line KG-1.</title>
        <authorList>
            <person name="Nagase T."/>
            <person name="Seki N."/>
            <person name="Tanaka A."/>
            <person name="Ishikawa K."/>
            <person name="Nomura N."/>
        </authorList>
    </citation>
    <scope>NUCLEOTIDE SEQUENCE [LARGE SCALE MRNA] (ISOFORM 1)</scope>
    <source>
        <tissue>Bone marrow</tissue>
    </source>
</reference>
<reference key="4">
    <citation type="submission" date="2005-10" db="EMBL/GenBank/DDBJ databases">
        <authorList>
            <consortium name="SeattleSNPs variation discovery resource"/>
        </authorList>
    </citation>
    <scope>NUCLEOTIDE SEQUENCE [GENOMIC DNA]</scope>
    <scope>VARIANTS LYS-128; THR-371; ASP-515; MET-543; VAL-602 AND LEU-713</scope>
</reference>
<reference key="5">
    <citation type="journal article" date="2006" name="Nature">
        <title>The DNA sequence and biological annotation of human chromosome 1.</title>
        <authorList>
            <person name="Gregory S.G."/>
            <person name="Barlow K.F."/>
            <person name="McLay K.E."/>
            <person name="Kaul R."/>
            <person name="Swarbreck D."/>
            <person name="Dunham A."/>
            <person name="Scott C.E."/>
            <person name="Howe K.L."/>
            <person name="Woodfine K."/>
            <person name="Spencer C.C.A."/>
            <person name="Jones M.C."/>
            <person name="Gillson C."/>
            <person name="Searle S."/>
            <person name="Zhou Y."/>
            <person name="Kokocinski F."/>
            <person name="McDonald L."/>
            <person name="Evans R."/>
            <person name="Phillips K."/>
            <person name="Atkinson A."/>
            <person name="Cooper R."/>
            <person name="Jones C."/>
            <person name="Hall R.E."/>
            <person name="Andrews T.D."/>
            <person name="Lloyd C."/>
            <person name="Ainscough R."/>
            <person name="Almeida J.P."/>
            <person name="Ambrose K.D."/>
            <person name="Anderson F."/>
            <person name="Andrew R.W."/>
            <person name="Ashwell R.I.S."/>
            <person name="Aubin K."/>
            <person name="Babbage A.K."/>
            <person name="Bagguley C.L."/>
            <person name="Bailey J."/>
            <person name="Beasley H."/>
            <person name="Bethel G."/>
            <person name="Bird C.P."/>
            <person name="Bray-Allen S."/>
            <person name="Brown J.Y."/>
            <person name="Brown A.J."/>
            <person name="Buckley D."/>
            <person name="Burton J."/>
            <person name="Bye J."/>
            <person name="Carder C."/>
            <person name="Chapman J.C."/>
            <person name="Clark S.Y."/>
            <person name="Clarke G."/>
            <person name="Clee C."/>
            <person name="Cobley V."/>
            <person name="Collier R.E."/>
            <person name="Corby N."/>
            <person name="Coville G.J."/>
            <person name="Davies J."/>
            <person name="Deadman R."/>
            <person name="Dunn M."/>
            <person name="Earthrowl M."/>
            <person name="Ellington A.G."/>
            <person name="Errington H."/>
            <person name="Frankish A."/>
            <person name="Frankland J."/>
            <person name="French L."/>
            <person name="Garner P."/>
            <person name="Garnett J."/>
            <person name="Gay L."/>
            <person name="Ghori M.R.J."/>
            <person name="Gibson R."/>
            <person name="Gilby L.M."/>
            <person name="Gillett W."/>
            <person name="Glithero R.J."/>
            <person name="Grafham D.V."/>
            <person name="Griffiths C."/>
            <person name="Griffiths-Jones S."/>
            <person name="Grocock R."/>
            <person name="Hammond S."/>
            <person name="Harrison E.S.I."/>
            <person name="Hart E."/>
            <person name="Haugen E."/>
            <person name="Heath P.D."/>
            <person name="Holmes S."/>
            <person name="Holt K."/>
            <person name="Howden P.J."/>
            <person name="Hunt A.R."/>
            <person name="Hunt S.E."/>
            <person name="Hunter G."/>
            <person name="Isherwood J."/>
            <person name="James R."/>
            <person name="Johnson C."/>
            <person name="Johnson D."/>
            <person name="Joy A."/>
            <person name="Kay M."/>
            <person name="Kershaw J.K."/>
            <person name="Kibukawa M."/>
            <person name="Kimberley A.M."/>
            <person name="King A."/>
            <person name="Knights A.J."/>
            <person name="Lad H."/>
            <person name="Laird G."/>
            <person name="Lawlor S."/>
            <person name="Leongamornlert D.A."/>
            <person name="Lloyd D.M."/>
            <person name="Loveland J."/>
            <person name="Lovell J."/>
            <person name="Lush M.J."/>
            <person name="Lyne R."/>
            <person name="Martin S."/>
            <person name="Mashreghi-Mohammadi M."/>
            <person name="Matthews L."/>
            <person name="Matthews N.S.W."/>
            <person name="McLaren S."/>
            <person name="Milne S."/>
            <person name="Mistry S."/>
            <person name="Moore M.J.F."/>
            <person name="Nickerson T."/>
            <person name="O'Dell C.N."/>
            <person name="Oliver K."/>
            <person name="Palmeiri A."/>
            <person name="Palmer S.A."/>
            <person name="Parker A."/>
            <person name="Patel D."/>
            <person name="Pearce A.V."/>
            <person name="Peck A.I."/>
            <person name="Pelan S."/>
            <person name="Phelps K."/>
            <person name="Phillimore B.J."/>
            <person name="Plumb R."/>
            <person name="Rajan J."/>
            <person name="Raymond C."/>
            <person name="Rouse G."/>
            <person name="Saenphimmachak C."/>
            <person name="Sehra H.K."/>
            <person name="Sheridan E."/>
            <person name="Shownkeen R."/>
            <person name="Sims S."/>
            <person name="Skuce C.D."/>
            <person name="Smith M."/>
            <person name="Steward C."/>
            <person name="Subramanian S."/>
            <person name="Sycamore N."/>
            <person name="Tracey A."/>
            <person name="Tromans A."/>
            <person name="Van Helmond Z."/>
            <person name="Wall M."/>
            <person name="Wallis J.M."/>
            <person name="White S."/>
            <person name="Whitehead S.L."/>
            <person name="Wilkinson J.E."/>
            <person name="Willey D.L."/>
            <person name="Williams H."/>
            <person name="Wilming L."/>
            <person name="Wray P.W."/>
            <person name="Wu Z."/>
            <person name="Coulson A."/>
            <person name="Vaudin M."/>
            <person name="Sulston J.E."/>
            <person name="Durbin R.M."/>
            <person name="Hubbard T."/>
            <person name="Wooster R."/>
            <person name="Dunham I."/>
            <person name="Carter N.P."/>
            <person name="McVean G."/>
            <person name="Ross M.T."/>
            <person name="Harrow J."/>
            <person name="Olson M.V."/>
            <person name="Beck S."/>
            <person name="Rogers J."/>
            <person name="Bentley D.R."/>
        </authorList>
    </citation>
    <scope>NUCLEOTIDE SEQUENCE [LARGE SCALE GENOMIC DNA]</scope>
</reference>
<reference key="6">
    <citation type="submission" date="2005-09" db="EMBL/GenBank/DDBJ databases">
        <authorList>
            <person name="Mural R.J."/>
            <person name="Istrail S."/>
            <person name="Sutton G.G."/>
            <person name="Florea L."/>
            <person name="Halpern A.L."/>
            <person name="Mobarry C.M."/>
            <person name="Lippert R."/>
            <person name="Walenz B."/>
            <person name="Shatkay H."/>
            <person name="Dew I."/>
            <person name="Miller J.R."/>
            <person name="Flanigan M.J."/>
            <person name="Edwards N.J."/>
            <person name="Bolanos R."/>
            <person name="Fasulo D."/>
            <person name="Halldorsson B.V."/>
            <person name="Hannenhalli S."/>
            <person name="Turner R."/>
            <person name="Yooseph S."/>
            <person name="Lu F."/>
            <person name="Nusskern D.R."/>
            <person name="Shue B.C."/>
            <person name="Zheng X.H."/>
            <person name="Zhong F."/>
            <person name="Delcher A.L."/>
            <person name="Huson D.H."/>
            <person name="Kravitz S.A."/>
            <person name="Mouchard L."/>
            <person name="Reinert K."/>
            <person name="Remington K.A."/>
            <person name="Clark A.G."/>
            <person name="Waterman M.S."/>
            <person name="Eichler E.E."/>
            <person name="Adams M.D."/>
            <person name="Hunkapiller M.W."/>
            <person name="Myers E.W."/>
            <person name="Venter J.C."/>
        </authorList>
    </citation>
    <scope>NUCLEOTIDE SEQUENCE [LARGE SCALE GENOMIC DNA]</scope>
</reference>
<reference key="7">
    <citation type="journal article" date="2004" name="Genome Res.">
        <title>The status, quality, and expansion of the NIH full-length cDNA project: the Mammalian Gene Collection (MGC).</title>
        <authorList>
            <consortium name="The MGC Project Team"/>
        </authorList>
    </citation>
    <scope>NUCLEOTIDE SEQUENCE [LARGE SCALE MRNA] (ISOFORMS 1 AND 2)</scope>
</reference>
<reference key="8">
    <citation type="journal article" date="2003" name="Mol. Cell. Biol.">
        <title>Identification of NAP1, a regulatory subunit of IkappaB kinase-related kinases that potentiates NF-kappaB signaling.</title>
        <authorList>
            <person name="Fujita F."/>
            <person name="Taniguchi Y."/>
            <person name="Kato T."/>
            <person name="Narita Y."/>
            <person name="Furuya A."/>
            <person name="Ogawa T."/>
            <person name="Sakurai H."/>
            <person name="Joh T."/>
            <person name="Itoh M."/>
            <person name="Delhase M."/>
            <person name="Karin M."/>
            <person name="Nakanishi M."/>
        </authorList>
    </citation>
    <scope>INTERACTION WITH AZI2</scope>
</reference>
<reference key="9">
    <citation type="journal article" date="2004" name="J. Biol. Chem.">
        <title>Mechanisms of the TRIF-induced interferon-stimulated response element and NF-kappaB activation and apoptosis pathways.</title>
        <authorList>
            <person name="Han K.J."/>
            <person name="Su X."/>
            <person name="Xu L.-G."/>
            <person name="Bin L.H."/>
            <person name="Zhang J."/>
            <person name="Shu H.-B."/>
        </authorList>
    </citation>
    <scope>INTERACTION WITH TICAM1</scope>
</reference>
<reference key="10">
    <citation type="journal article" date="2005" name="EMBO J.">
        <title>SIKE is an IKK epsilon/TBK1-associated suppressor of TLR3- and virus-triggered IRF-3 activation pathways.</title>
        <authorList>
            <person name="Huang J."/>
            <person name="Liu T."/>
            <person name="Xu L.-G."/>
            <person name="Chen D."/>
            <person name="Zhai Z."/>
            <person name="Shu H.-B."/>
        </authorList>
    </citation>
    <scope>INTERACTION WITH SIKE1; IRF3; TICAM1 AND RIGI</scope>
</reference>
<reference key="11">
    <citation type="journal article" date="2005" name="Nature">
        <title>Cardif is an adaptor protein in the RIG-I antiviral pathway and is targeted by hepatitis C virus.</title>
        <authorList>
            <person name="Meylan E."/>
            <person name="Curran J."/>
            <person name="Hofmann K."/>
            <person name="Moradpour D."/>
            <person name="Binder M."/>
            <person name="Bartenschlager R."/>
            <person name="Tschopp J."/>
        </authorList>
    </citation>
    <scope>INTERACTION WITH MAVS</scope>
</reference>
<reference key="12">
    <citation type="journal article" date="2007" name="EMBO J.">
        <title>SINTBAD, a novel component of innate antiviral immunity, shares a TBK1-binding domain with NAP1 and TANK.</title>
        <authorList>
            <person name="Ryzhakov G."/>
            <person name="Randow F."/>
        </authorList>
    </citation>
    <scope>FUNCTION</scope>
    <scope>INTERACTION WITH AZI2; TANK AND TBKBP1</scope>
</reference>
<reference key="13">
    <citation type="journal article" date="2007" name="Proc. Natl. Acad. Sci. U.S.A.">
        <title>Negative regulation of MDA5- but not RIG-I-mediated innate antiviral signaling by the dihydroxyacetone kinase.</title>
        <authorList>
            <person name="Diao F."/>
            <person name="Li S."/>
            <person name="Tian Y."/>
            <person name="Zhang M."/>
            <person name="Xu L.G."/>
            <person name="Zhang Y."/>
            <person name="Wang R.P."/>
            <person name="Chen D."/>
            <person name="Zhai Z."/>
            <person name="Zhong B."/>
            <person name="Tien P."/>
            <person name="Shu H.B."/>
        </authorList>
    </citation>
    <scope>INTERACTION WITH IFIH1</scope>
</reference>
<reference key="14">
    <citation type="journal article" date="2008" name="EMBO J.">
        <title>The DEAD-box helicase DDX3X is a critical component of the TANK-binding kinase 1-dependent innate immune response.</title>
        <authorList>
            <person name="Soulat D."/>
            <person name="Burckstummer T."/>
            <person name="Westermayer S."/>
            <person name="Goncalves A."/>
            <person name="Bauch A."/>
            <person name="Stefanovic A."/>
            <person name="Hantschel O."/>
            <person name="Bennett K.L."/>
            <person name="Decker T."/>
            <person name="Superti-Furga G."/>
        </authorList>
    </citation>
    <scope>FUNCTION IN PHOSPHORYLATION OF DDX3X</scope>
</reference>
<reference key="15">
    <citation type="journal article" date="2008" name="EMBO J.">
        <title>Viral targeting of DEAD box protein 3 reveals its role in TBK1/IKKepsilon-mediated IRF activation.</title>
        <authorList>
            <person name="Schroder M."/>
            <person name="Baran M."/>
            <person name="Bowie A.G."/>
        </authorList>
    </citation>
    <scope>INTERACTION WITH DDX3X</scope>
</reference>
<reference key="16">
    <citation type="journal article" date="2008" name="EMBO Rep.">
        <title>The tumour suppressor CYLD is a negative regulator of RIG-I-mediated antiviral response.</title>
        <authorList>
            <person name="Friedman C.S."/>
            <person name="O'Donnell M.A."/>
            <person name="Legarda-Addison D."/>
            <person name="Ng A."/>
            <person name="Cardenas W.B."/>
            <person name="Yount J.S."/>
            <person name="Moran T.M."/>
            <person name="Basler C.F."/>
            <person name="Komuro A."/>
            <person name="Horvath C.M."/>
            <person name="Xavier R."/>
            <person name="Ting A.T."/>
        </authorList>
    </citation>
    <scope>INTERACTION WITH CYLD</scope>
</reference>
<reference key="17">
    <citation type="journal article" date="2009" name="J. Virol.">
        <title>Ebola virus protein VP35 impairs the function of interferon regulatory factor-activating kinases IKKepsilon and TBK-1.</title>
        <authorList>
            <person name="Prins K.C."/>
            <person name="Cardenas W.B."/>
            <person name="Basler C.F."/>
        </authorList>
    </citation>
    <scope>FUNCTION IN IRF3 PHOSPHORYLATION</scope>
    <scope>INTERACTION WITH EBOLAVIRUS PROTEIN VP35 (MICROBIAL INFECTION)</scope>
    <scope>AUTOPHOSPHORYLATION</scope>
</reference>
<reference key="18">
    <citation type="journal article" date="2009" name="Mol. Cell. Proteomics">
        <title>Large-scale proteomics analysis of the human kinome.</title>
        <authorList>
            <person name="Oppermann F.S."/>
            <person name="Gnad F."/>
            <person name="Olsen J.V."/>
            <person name="Hornberger R."/>
            <person name="Greff Z."/>
            <person name="Keri G."/>
            <person name="Mann M."/>
            <person name="Daub H."/>
        </authorList>
    </citation>
    <scope>PHOSPHORYLATION [LARGE SCALE ANALYSIS] AT SER-664</scope>
    <scope>IDENTIFICATION BY MASS SPECTROMETRY [LARGE SCALE ANALYSIS]</scope>
</reference>
<reference key="19">
    <citation type="journal article" date="2010" name="Mol. Cell">
        <title>SUMOylation-dependent localization of IKKepsilon in PML nuclear bodies is essential for protection against DNA-damage-triggered cell death.</title>
        <authorList>
            <person name="Renner F."/>
            <person name="Moreno R."/>
            <person name="Schmitz M.L."/>
        </authorList>
    </citation>
    <scope>FUNCTION</scope>
    <scope>INTERACTION WITH TOPORS</scope>
    <scope>SUMOYLATION AT LYS-231 BY TOPORS</scope>
    <scope>DESUMOYLATION BY SENP1</scope>
    <scope>MUTAGENESIS OF LYS-231</scope>
    <scope>SUBCELLULAR LOCATION</scope>
</reference>
<reference key="20">
    <citation type="journal article" date="2010" name="PLoS Pathog.">
        <title>Hepatitis B virus polymerase blocks pattern recognition receptor signaling via interaction with DDX3: implications for immune evasion.</title>
        <authorList>
            <person name="Wang H."/>
            <person name="Ryu W.S."/>
        </authorList>
    </citation>
    <scope>INTERACTION WITH DDX3X</scope>
</reference>
<reference key="21">
    <citation type="journal article" date="2011" name="Biochem. J.">
        <title>Novel cross-talk within the IKK family controls innate immunity.</title>
        <authorList>
            <person name="Clark K."/>
            <person name="Peggie M."/>
            <person name="Plater L."/>
            <person name="Sorcek R.J."/>
            <person name="Young E.R."/>
            <person name="Madwed J.B."/>
            <person name="Hough J."/>
            <person name="McIver E.G."/>
            <person name="Cohen P."/>
        </authorList>
    </citation>
    <scope>FUNCTION</scope>
    <scope>PHOSPHORYLATION BY IKBKB/IKKB</scope>
</reference>
<reference key="22">
    <citation type="journal article" date="2011" name="Proc. Natl. Acad. Sci. U.S.A.">
        <title>IkappaB kinase epsilon and TANK-binding kinase 1 activate AKT by direct phosphorylation.</title>
        <authorList>
            <person name="Xie X."/>
            <person name="Zhang D."/>
            <person name="Zhao B."/>
            <person name="Lu M.K."/>
            <person name="You M."/>
            <person name="Condorelli G."/>
            <person name="Wang C.Y."/>
            <person name="Guan K.L."/>
        </authorList>
    </citation>
    <scope>FUNCTION IN AKT PHOSPHORYLATION</scope>
    <scope>SUBCELLULAR LOCATION</scope>
</reference>
<reference key="23">
    <citation type="journal article" date="2012" name="J. Virol.">
        <title>Arenavirus nucleoprotein targets interferon regulatory factor-activating kinase IKKepsilon.</title>
        <authorList>
            <person name="Pythoud C."/>
            <person name="Rodrigo W.W."/>
            <person name="Pasqual G."/>
            <person name="Rothenberger S."/>
            <person name="Martinez-Sobrido L."/>
            <person name="de la Torre J.C."/>
            <person name="Kunz S."/>
        </authorList>
    </citation>
    <scope>FUNCTION</scope>
    <scope>INTERACTION WITH ARENAVIRUS PROTEIN N (MICROBIAL INFECTION)</scope>
</reference>
<reference key="24">
    <citation type="journal article" date="2013" name="Cell Rep.">
        <title>IKKepsilon-mediated tumorigenesis requires K63-linked polyubiquitination by a cIAP1/cIAP2/TRAF2 E3 ubiquitin ligase complex.</title>
        <authorList>
            <person name="Zhou A.Y."/>
            <person name="Shen R.R."/>
            <person name="Kim E."/>
            <person name="Lock Y.J."/>
            <person name="Xu M."/>
            <person name="Chen Z.J."/>
            <person name="Hahn W.C."/>
        </authorList>
    </citation>
    <scope>FUNCTION</scope>
    <scope>HOMODIMER</scope>
    <scope>INTERACTION WITH IKBKB; IKBKG AND MYD88</scope>
    <scope>INDUCTION BY LPS</scope>
    <scope>UBIQUITINATION AT LYS-30 AND LYS-401</scope>
    <scope>MUTAGENESIS OF LYS-30; LYS-401 AND LYS-416</scope>
</reference>
<reference key="25">
    <citation type="journal article" date="2013" name="Mol. Cell. Biol.">
        <title>Human DEAD box helicase 3 couples IkappaB kinase epsilon to interferon regulatory factor 3 activation.</title>
        <authorList>
            <person name="Gu L."/>
            <person name="Fullam A."/>
            <person name="Brennan R."/>
            <person name="Schroder M."/>
        </authorList>
    </citation>
    <scope>FUNCTION IN DDX3X AND IRF3 PHOSPHORYLATION</scope>
    <scope>INTERACTION WITH DDX3X AND IRF3</scope>
    <scope>PHOSPHORYLATION AT SER-172</scope>
</reference>
<reference key="26">
    <citation type="journal article" date="2014" name="Immunity">
        <title>Unanchored K48-linked polyubiquitin synthesized by the E3-ubiquitin ligase TRIM6 stimulates the interferon-IKKepsilon kinase-mediated antiviral response.</title>
        <authorList>
            <person name="Rajsbaum R."/>
            <person name="Versteeg G.A."/>
            <person name="Schmid S."/>
            <person name="Maestre A.M."/>
            <person name="Belicha-Villanueva A."/>
            <person name="Martinez-Romero C."/>
            <person name="Patel J.R."/>
            <person name="Morrison J."/>
            <person name="Pisanelli G."/>
            <person name="Miorin L."/>
            <person name="Laurent-Rolle M."/>
            <person name="Moulton H.M."/>
            <person name="Stein D.A."/>
            <person name="Fernandez-Sesma A."/>
            <person name="tenOever B.R."/>
            <person name="Garcia-Sastre A."/>
        </authorList>
    </citation>
    <scope>INTERACTION WITH TRIM6 AND POLYUBIQUITIN</scope>
    <scope>SUBCELLULAR LOCATION</scope>
    <scope>PHOSPHORYLATION AT THR-501</scope>
</reference>
<reference key="27">
    <citation type="journal article" date="2014" name="J. Mol. Cell Biol.">
        <title>Viral suppression of innate immunity via spatial isolation of TBK1/IKKepsilon from mitochondrial antiviral platform.</title>
        <authorList>
            <person name="Ning Y.J."/>
            <person name="Wang M."/>
            <person name="Deng M."/>
            <person name="Shen S."/>
            <person name="Liu W."/>
            <person name="Cao W.C."/>
            <person name="Deng F."/>
            <person name="Wang Y.Y."/>
            <person name="Hu Z."/>
            <person name="Wang H."/>
        </authorList>
    </citation>
    <scope>INTERACTION WITH SFTSV NSS (MICROBIAL INFECTION)</scope>
</reference>
<reference key="28">
    <citation type="journal article" date="2015" name="Nucleic Acids Res.">
        <title>FKBP51 employs both scaffold and isomerase functions to promote NF-kappaB activation in melanoma.</title>
        <authorList>
            <person name="Romano S."/>
            <person name="Xiao Y."/>
            <person name="Nakaya M."/>
            <person name="D'Angelillo A."/>
            <person name="Chang M."/>
            <person name="Jin J."/>
            <person name="Hausch F."/>
            <person name="Masullo M."/>
            <person name="Feng X."/>
            <person name="Romano M.F."/>
            <person name="Sun S.C."/>
        </authorList>
    </citation>
    <scope>INTERACTION WITH FKBP5</scope>
</reference>
<reference key="29">
    <citation type="journal article" date="2017" name="Biochem. J.">
        <title>DDX3 directly regulates TRAF3 ubiquitination and acts as a scaffold to co-ordinate assembly of signalling complexes downstream from MAVS.</title>
        <authorList>
            <person name="Gu L."/>
            <person name="Fullam A."/>
            <person name="McCormack N."/>
            <person name="Hoehn Y."/>
            <person name="Schroeder M."/>
        </authorList>
    </citation>
    <scope>INTERACTION WITH DDX3X AND MAVS</scope>
</reference>
<reference key="30">
    <citation type="journal article" date="2017" name="J. Immunol.">
        <title>TTLL12 Inhibits the Activation of Cellular Antiviral Signaling through Interaction with VISA/MAVS.</title>
        <authorList>
            <person name="Ju L.G."/>
            <person name="Zhu Y."/>
            <person name="Lei P.J."/>
            <person name="Yan D."/>
            <person name="Zhu K."/>
            <person name="Wang X."/>
            <person name="Li Q.L."/>
            <person name="Li X.J."/>
            <person name="Chen J.W."/>
            <person name="Li L.Y."/>
            <person name="Wu M."/>
        </authorList>
    </citation>
    <scope>INTERACTION WITH TTLL12 AND MAVS</scope>
</reference>
<reference key="31">
    <citation type="journal article" date="2017" name="J. Virol.">
        <title>Positive and Negative Regulation of Type I Interferons by the Human T Cell Leukemia Virus Antisense Protein HBZ.</title>
        <authorList>
            <person name="Narulla M.S."/>
            <person name="Alasiri A."/>
            <person name="Charmier L."/>
            <person name="Noonan S."/>
            <person name="Conroy D."/>
            <person name="Hall W.W."/>
            <person name="Sheehy N."/>
        </authorList>
    </citation>
    <scope>INTERACTION WITH HUMAN T-CELL LEUKEMIA VIRUS 1/HTLV-1 PROTEIN HBZ</scope>
</reference>
<reference key="32">
    <citation type="journal article" date="2018" name="Proteomics">
        <title>Quantitative Proteomics Identified TTC4 as a TBK1 Interactor and a Positive Regulator of SeV-Induced Innate Immunity.</title>
        <authorList>
            <person name="Shang J."/>
            <person name="Xia T."/>
            <person name="Han Q.Q."/>
            <person name="Zhao X."/>
            <person name="Hu M.M."/>
            <person name="Shu H.B."/>
            <person name="Guo L."/>
        </authorList>
    </citation>
    <scope>INTERACTION WITH TBK1</scope>
</reference>
<reference key="33">
    <citation type="journal article" date="2019" name="J. Virol.">
        <title>Novel Functions of IFI44L as a Feedback Regulator of Host Antiviral Responses.</title>
        <authorList>
            <person name="DeDiego M.L."/>
            <person name="Martinez-Sobrido L."/>
            <person name="Topham D.J."/>
        </authorList>
    </citation>
    <scope>INTERACTION WITH FKBP5</scope>
</reference>
<reference key="34">
    <citation type="journal article" date="2020" name="Front. Immunol.">
        <title>Epstein-Barr Virus Early Protein BFRF1 Suppresses IFN-beta Activity by Inhibiting the Activation of IRF3.</title>
        <authorList>
            <person name="Wang P."/>
            <person name="Deng Y."/>
            <person name="Guo Y."/>
            <person name="Xu Z."/>
            <person name="Li Y."/>
            <person name="Ou X."/>
            <person name="Xie L."/>
            <person name="Lu M."/>
            <person name="Zhong J."/>
            <person name="Li B."/>
            <person name="Hu L."/>
            <person name="Deng S."/>
            <person name="Peng T."/>
            <person name="Cai M."/>
            <person name="Li M."/>
        </authorList>
    </citation>
    <scope>INTERACTION WITH EPSTEIN-BARR VIRUS PROTEIN NEC2/BFRF1 (MICROBIAL INFECTION)</scope>
</reference>
<reference key="35">
    <citation type="journal article" date="2007" name="Nature">
        <title>Patterns of somatic mutation in human cancer genomes.</title>
        <authorList>
            <person name="Greenman C."/>
            <person name="Stephens P."/>
            <person name="Smith R."/>
            <person name="Dalgliesh G.L."/>
            <person name="Hunter C."/>
            <person name="Bignell G."/>
            <person name="Davies H."/>
            <person name="Teague J."/>
            <person name="Butler A."/>
            <person name="Stevens C."/>
            <person name="Edkins S."/>
            <person name="O'Meara S."/>
            <person name="Vastrik I."/>
            <person name="Schmidt E.E."/>
            <person name="Avis T."/>
            <person name="Barthorpe S."/>
            <person name="Bhamra G."/>
            <person name="Buck G."/>
            <person name="Choudhury B."/>
            <person name="Clements J."/>
            <person name="Cole J."/>
            <person name="Dicks E."/>
            <person name="Forbes S."/>
            <person name="Gray K."/>
            <person name="Halliday K."/>
            <person name="Harrison R."/>
            <person name="Hills K."/>
            <person name="Hinton J."/>
            <person name="Jenkinson A."/>
            <person name="Jones D."/>
            <person name="Menzies A."/>
            <person name="Mironenko T."/>
            <person name="Perry J."/>
            <person name="Raine K."/>
            <person name="Richardson D."/>
            <person name="Shepherd R."/>
            <person name="Small A."/>
            <person name="Tofts C."/>
            <person name="Varian J."/>
            <person name="Webb T."/>
            <person name="West S."/>
            <person name="Widaa S."/>
            <person name="Yates A."/>
            <person name="Cahill D.P."/>
            <person name="Louis D.N."/>
            <person name="Goldstraw P."/>
            <person name="Nicholson A.G."/>
            <person name="Brasseur F."/>
            <person name="Looijenga L."/>
            <person name="Weber B.L."/>
            <person name="Chiew Y.-E."/>
            <person name="DeFazio A."/>
            <person name="Greaves M.F."/>
            <person name="Green A.R."/>
            <person name="Campbell P."/>
            <person name="Birney E."/>
            <person name="Easton D.F."/>
            <person name="Chenevix-Trench G."/>
            <person name="Tan M.-H."/>
            <person name="Khoo S.K."/>
            <person name="Teh B.T."/>
            <person name="Yuen S.T."/>
            <person name="Leung S.Y."/>
            <person name="Wooster R."/>
            <person name="Futreal P.A."/>
            <person name="Stratton M.R."/>
        </authorList>
    </citation>
    <scope>VARIANTS [LARGE SCALE ANALYSIS] THR-371; MET-483; VAL-602; GLU-660 AND LEU-713</scope>
</reference>
<protein>
    <recommendedName>
        <fullName>Inhibitor of nuclear factor kappa-B kinase subunit epsilon</fullName>
        <shortName>I-kappa-B kinase epsilon</shortName>
        <shortName>IKK-E</shortName>
        <shortName>IKK-epsilon</shortName>
        <shortName>IkBKE</shortName>
        <ecNumber>2.7.11.10</ecNumber>
    </recommendedName>
    <alternativeName>
        <fullName>Inducible I kappa-B kinase</fullName>
        <shortName>IKK-i</shortName>
    </alternativeName>
</protein>
<organism>
    <name type="scientific">Homo sapiens</name>
    <name type="common">Human</name>
    <dbReference type="NCBI Taxonomy" id="9606"/>
    <lineage>
        <taxon>Eukaryota</taxon>
        <taxon>Metazoa</taxon>
        <taxon>Chordata</taxon>
        <taxon>Craniata</taxon>
        <taxon>Vertebrata</taxon>
        <taxon>Euteleostomi</taxon>
        <taxon>Mammalia</taxon>
        <taxon>Eutheria</taxon>
        <taxon>Euarchontoglires</taxon>
        <taxon>Primates</taxon>
        <taxon>Haplorrhini</taxon>
        <taxon>Catarrhini</taxon>
        <taxon>Hominidae</taxon>
        <taxon>Homo</taxon>
    </lineage>
</organism>
<feature type="chain" id="PRO_0000086017" description="Inhibitor of nuclear factor kappa-B kinase subunit epsilon">
    <location>
        <begin position="1"/>
        <end position="716"/>
    </location>
</feature>
<feature type="domain" description="Protein kinase" evidence="1">
    <location>
        <begin position="9"/>
        <end position="315"/>
    </location>
</feature>
<feature type="region of interest" description="Interaction with DDX3X">
    <location>
        <begin position="383"/>
        <end position="647"/>
    </location>
</feature>
<feature type="region of interest" description="Leucine-zipper">
    <location>
        <begin position="436"/>
        <end position="457"/>
    </location>
</feature>
<feature type="active site" description="Proton acceptor" evidence="1">
    <location>
        <position position="135"/>
    </location>
</feature>
<feature type="binding site" evidence="1">
    <location>
        <begin position="15"/>
        <end position="23"/>
    </location>
    <ligand>
        <name>ATP</name>
        <dbReference type="ChEBI" id="CHEBI:30616"/>
    </ligand>
</feature>
<feature type="binding site" evidence="32">
    <location>
        <position position="38"/>
    </location>
    <ligand>
        <name>ATP</name>
        <dbReference type="ChEBI" id="CHEBI:30616"/>
    </ligand>
</feature>
<feature type="modified residue" description="Phosphoserine; by autocatalysis and IKKB" evidence="20">
    <location>
        <position position="172"/>
    </location>
</feature>
<feature type="modified residue" description="Phosphothreonine" evidence="22">
    <location>
        <position position="501"/>
    </location>
</feature>
<feature type="modified residue" description="Phosphoserine" evidence="33">
    <location>
        <position position="664"/>
    </location>
</feature>
<feature type="cross-link" description="Glycyl lysine isopeptide (Lys-Gly) (interchain with G-Cter in ubiquitin)" evidence="19">
    <location>
        <position position="30"/>
    </location>
</feature>
<feature type="cross-link" description="Glycyl lysine isopeptide (Lys-Gly) (interchain with G-Cter in SUMO1)" evidence="14">
    <location>
        <position position="231"/>
    </location>
</feature>
<feature type="cross-link" description="Glycyl lysine isopeptide (Lys-Gly) (interchain with G-Cter in ubiquitin)" evidence="19">
    <location>
        <position position="401"/>
    </location>
</feature>
<feature type="splice variant" id="VSP_044305" description="In isoform 2." evidence="31">
    <location>
        <begin position="1"/>
        <end position="85"/>
    </location>
</feature>
<feature type="sequence variant" id="VAR_038816" description="In dbSNP:rs41296028." evidence="30">
    <original>E</original>
    <variation>K</variation>
    <location>
        <position position="128"/>
    </location>
</feature>
<feature type="sequence variant" id="VAR_038817" description="In dbSNP:rs17021877." evidence="7 30">
    <original>A</original>
    <variation>T</variation>
    <location>
        <position position="371"/>
    </location>
</feature>
<feature type="sequence variant" id="VAR_040571" description="In dbSNP:rs52817862." evidence="7">
    <original>T</original>
    <variation>M</variation>
    <location>
        <position position="483"/>
    </location>
</feature>
<feature type="sequence variant" id="VAR_038818" description="In dbSNP:rs41299015." evidence="30">
    <original>E</original>
    <variation>D</variation>
    <location>
        <position position="515"/>
    </location>
</feature>
<feature type="sequence variant" id="VAR_038819" description="In dbSNP:rs41299037." evidence="30">
    <original>I</original>
    <variation>M</variation>
    <location>
        <position position="543"/>
    </location>
</feature>
<feature type="sequence variant" id="VAR_038820" description="In dbSNP:rs12059562." evidence="7 30">
    <original>A</original>
    <variation>V</variation>
    <location>
        <position position="602"/>
    </location>
</feature>
<feature type="sequence variant" id="VAR_040572" description="In dbSNP:rs55822317." evidence="7">
    <original>G</original>
    <variation>E</variation>
    <location>
        <position position="660"/>
    </location>
</feature>
<feature type="sequence variant" id="VAR_019989" description="In dbSNP:rs3748022." evidence="7 30">
    <original>P</original>
    <variation>L</variation>
    <location>
        <position position="713"/>
    </location>
</feature>
<feature type="mutagenesis site" description="Loss of ubiquitination and decreased kinase activity. No effect on homodimerization." evidence="19">
    <original>K</original>
    <variation>A</variation>
    <location>
        <position position="30"/>
    </location>
</feature>
<feature type="mutagenesis site" description="Loss of ubiquitination and decreased kinase activity. Decreases interaction with IKBKB, IKBKG and MYD88. No effect on homodimerization." evidence="19">
    <original>K</original>
    <variation>R</variation>
    <location>
        <position position="30"/>
    </location>
</feature>
<feature type="mutagenesis site" description="Loss of kinase activity and loss of nuclear import." evidence="2">
    <original>K</original>
    <variation>A</variation>
    <location>
        <position position="38"/>
    </location>
</feature>
<feature type="mutagenesis site" description="Slight decrease of kinase activity." evidence="2">
    <original>E</original>
    <variation>A</variation>
    <location>
        <position position="168"/>
    </location>
</feature>
<feature type="mutagenesis site" description="Loss of autophosphorylation and of kinase activity." evidence="2">
    <original>S</original>
    <variation>A</variation>
    <location>
        <position position="172"/>
    </location>
</feature>
<feature type="mutagenesis site" description="Decrease in kinase activity." evidence="2">
    <original>S</original>
    <variation>E</variation>
    <location>
        <position position="172"/>
    </location>
</feature>
<feature type="mutagenesis site" description="Loss of sumoylation and loss of targeting to nuclear bodies." evidence="14">
    <original>K</original>
    <variation>R</variation>
    <location>
        <position position="231"/>
    </location>
</feature>
<feature type="mutagenesis site" description="Loss of ubiquitination and decreased kinase activity. No effect on homodimerization." evidence="19">
    <original>K</original>
    <variation>A</variation>
    <location>
        <position position="401"/>
    </location>
</feature>
<feature type="mutagenesis site" description="Loss of ubiquitination and decreased kinase activity. Decreases interaction with IKBKB, IKBKG and MYD88. No effect on homodimerization." evidence="19">
    <original>K</original>
    <variation>R</variation>
    <location>
        <position position="401"/>
    </location>
</feature>
<feature type="mutagenesis site" description="No effect on ubiquitination." evidence="19">
    <original>K</original>
    <variation>A</variation>
    <location>
        <position position="416"/>
    </location>
</feature>
<feature type="mutagenesis site" description="No effect on ubiquitination." evidence="19">
    <original>K</original>
    <variation>R</variation>
    <location>
        <position position="416"/>
    </location>
</feature>
<feature type="sequence conflict" description="In Ref. 7; AAI05925." evidence="32" ref="7">
    <original>R</original>
    <variation>Q</variation>
    <location>
        <position position="187"/>
    </location>
</feature>
<proteinExistence type="evidence at protein level"/>
<name>IKKE_HUMAN</name>